<reference key="1">
    <citation type="journal article" date="2009" name="ISME J.">
        <title>The genome sequence of the psychrophilic archaeon, Methanococcoides burtonii: the role of genome evolution in cold adaptation.</title>
        <authorList>
            <person name="Allen M.A."/>
            <person name="Lauro F.M."/>
            <person name="Williams T.J."/>
            <person name="Burg D."/>
            <person name="Siddiqui K.S."/>
            <person name="De Francisci D."/>
            <person name="Chong K.W."/>
            <person name="Pilak O."/>
            <person name="Chew H.H."/>
            <person name="De Maere M.Z."/>
            <person name="Ting L."/>
            <person name="Katrib M."/>
            <person name="Ng C."/>
            <person name="Sowers K.R."/>
            <person name="Galperin M.Y."/>
            <person name="Anderson I.J."/>
            <person name="Ivanova N."/>
            <person name="Dalin E."/>
            <person name="Martinez M."/>
            <person name="Lapidus A."/>
            <person name="Hauser L."/>
            <person name="Land M."/>
            <person name="Thomas T."/>
            <person name="Cavicchioli R."/>
        </authorList>
    </citation>
    <scope>NUCLEOTIDE SEQUENCE [LARGE SCALE GENOMIC DNA]</scope>
    <source>
        <strain>DSM 6242 / NBRC 107633 / OCM 468 / ACE-M</strain>
    </source>
</reference>
<name>RIMK_METBU</name>
<feature type="chain" id="PRO_1000087748" description="Probable alpha-L-glutamate ligase">
    <location>
        <begin position="1"/>
        <end position="301"/>
    </location>
</feature>
<feature type="domain" description="ATP-grasp" evidence="1">
    <location>
        <begin position="104"/>
        <end position="287"/>
    </location>
</feature>
<feature type="binding site" evidence="1">
    <location>
        <position position="141"/>
    </location>
    <ligand>
        <name>ATP</name>
        <dbReference type="ChEBI" id="CHEBI:30616"/>
    </ligand>
</feature>
<feature type="binding site" evidence="1">
    <location>
        <begin position="178"/>
        <end position="179"/>
    </location>
    <ligand>
        <name>ATP</name>
        <dbReference type="ChEBI" id="CHEBI:30616"/>
    </ligand>
</feature>
<feature type="binding site" evidence="1">
    <location>
        <position position="187"/>
    </location>
    <ligand>
        <name>ATP</name>
        <dbReference type="ChEBI" id="CHEBI:30616"/>
    </ligand>
</feature>
<feature type="binding site" evidence="1">
    <location>
        <begin position="211"/>
        <end position="213"/>
    </location>
    <ligand>
        <name>ATP</name>
        <dbReference type="ChEBI" id="CHEBI:30616"/>
    </ligand>
</feature>
<feature type="binding site" evidence="1">
    <location>
        <position position="248"/>
    </location>
    <ligand>
        <name>Mg(2+)</name>
        <dbReference type="ChEBI" id="CHEBI:18420"/>
        <label>1</label>
    </ligand>
</feature>
<feature type="binding site" evidence="1">
    <location>
        <position position="248"/>
    </location>
    <ligand>
        <name>Mn(2+)</name>
        <dbReference type="ChEBI" id="CHEBI:29035"/>
        <label>1</label>
    </ligand>
</feature>
<feature type="binding site" evidence="1">
    <location>
        <position position="260"/>
    </location>
    <ligand>
        <name>Mg(2+)</name>
        <dbReference type="ChEBI" id="CHEBI:18420"/>
        <label>1</label>
    </ligand>
</feature>
<feature type="binding site" evidence="1">
    <location>
        <position position="260"/>
    </location>
    <ligand>
        <name>Mg(2+)</name>
        <dbReference type="ChEBI" id="CHEBI:18420"/>
        <label>2</label>
    </ligand>
</feature>
<feature type="binding site" evidence="1">
    <location>
        <position position="260"/>
    </location>
    <ligand>
        <name>Mn(2+)</name>
        <dbReference type="ChEBI" id="CHEBI:29035"/>
        <label>1</label>
    </ligand>
</feature>
<feature type="binding site" evidence="1">
    <location>
        <position position="260"/>
    </location>
    <ligand>
        <name>Mn(2+)</name>
        <dbReference type="ChEBI" id="CHEBI:29035"/>
        <label>2</label>
    </ligand>
</feature>
<feature type="binding site" evidence="1">
    <location>
        <position position="262"/>
    </location>
    <ligand>
        <name>Mg(2+)</name>
        <dbReference type="ChEBI" id="CHEBI:18420"/>
        <label>2</label>
    </ligand>
</feature>
<feature type="binding site" evidence="1">
    <location>
        <position position="262"/>
    </location>
    <ligand>
        <name>Mn(2+)</name>
        <dbReference type="ChEBI" id="CHEBI:29035"/>
        <label>2</label>
    </ligand>
</feature>
<protein>
    <recommendedName>
        <fullName evidence="1">Probable alpha-L-glutamate ligase</fullName>
        <ecNumber evidence="1">6.3.2.-</ecNumber>
    </recommendedName>
</protein>
<comment type="cofactor">
    <cofactor evidence="1">
        <name>Mg(2+)</name>
        <dbReference type="ChEBI" id="CHEBI:18420"/>
    </cofactor>
    <cofactor evidence="1">
        <name>Mn(2+)</name>
        <dbReference type="ChEBI" id="CHEBI:29035"/>
    </cofactor>
    <text evidence="1">Binds 2 magnesium or manganese ions per subunit.</text>
</comment>
<comment type="similarity">
    <text evidence="1">Belongs to the RimK family.</text>
</comment>
<sequence>MKIALLSRSRKLYSSRRLIEAAEERGHEIQVIDVLRAYMNITSHKPSIHYKGEELEGFDVVIPRIGASVTFYGASVLRQFEMMGVYPLNESVAITRSRDKLRSLQLLSRKGIGMPVTGYASKPDDIKDVIKMVGGAPLVVKLLEGTQGIGVVLAETQKAAESVIEGFMGVKANILVQEYIKEANGADIRCFVIGGKVVASMKRQAPNGEFRSNLHRGGSAEVIRITPEERSTAVSAAKIMGLNVAGVDLLRSNHGPVVMEVNSSPGLRGIETATGKDIAGMIIEYIEKSGKVGKTKTRGKG</sequence>
<gene>
    <name evidence="1" type="primary">rimK</name>
    <name type="ordered locus">Mbur_0686</name>
</gene>
<organism>
    <name type="scientific">Methanococcoides burtonii (strain DSM 6242 / NBRC 107633 / OCM 468 / ACE-M)</name>
    <dbReference type="NCBI Taxonomy" id="259564"/>
    <lineage>
        <taxon>Archaea</taxon>
        <taxon>Methanobacteriati</taxon>
        <taxon>Methanobacteriota</taxon>
        <taxon>Stenosarchaea group</taxon>
        <taxon>Methanomicrobia</taxon>
        <taxon>Methanosarcinales</taxon>
        <taxon>Methanosarcinaceae</taxon>
        <taxon>Methanococcoides</taxon>
    </lineage>
</organism>
<proteinExistence type="inferred from homology"/>
<dbReference type="EC" id="6.3.2.-" evidence="1"/>
<dbReference type="EMBL" id="CP000300">
    <property type="protein sequence ID" value="ABE51652.1"/>
    <property type="molecule type" value="Genomic_DNA"/>
</dbReference>
<dbReference type="RefSeq" id="WP_011498810.1">
    <property type="nucleotide sequence ID" value="NC_007955.1"/>
</dbReference>
<dbReference type="SMR" id="Q12Y24"/>
<dbReference type="STRING" id="259564.Mbur_0686"/>
<dbReference type="GeneID" id="3998145"/>
<dbReference type="KEGG" id="mbu:Mbur_0686"/>
<dbReference type="HOGENOM" id="CLU_054353_0_1_2"/>
<dbReference type="OrthoDB" id="33241at2157"/>
<dbReference type="Proteomes" id="UP000001979">
    <property type="component" value="Chromosome"/>
</dbReference>
<dbReference type="GO" id="GO:0005737">
    <property type="term" value="C:cytoplasm"/>
    <property type="evidence" value="ECO:0007669"/>
    <property type="project" value="TreeGrafter"/>
</dbReference>
<dbReference type="GO" id="GO:0005524">
    <property type="term" value="F:ATP binding"/>
    <property type="evidence" value="ECO:0007669"/>
    <property type="project" value="UniProtKB-UniRule"/>
</dbReference>
<dbReference type="GO" id="GO:0046872">
    <property type="term" value="F:metal ion binding"/>
    <property type="evidence" value="ECO:0007669"/>
    <property type="project" value="UniProtKB-KW"/>
</dbReference>
<dbReference type="GO" id="GO:0018169">
    <property type="term" value="F:ribosomal S6-glutamic acid ligase activity"/>
    <property type="evidence" value="ECO:0007669"/>
    <property type="project" value="TreeGrafter"/>
</dbReference>
<dbReference type="GO" id="GO:0036211">
    <property type="term" value="P:protein modification process"/>
    <property type="evidence" value="ECO:0007669"/>
    <property type="project" value="InterPro"/>
</dbReference>
<dbReference type="GO" id="GO:0009432">
    <property type="term" value="P:SOS response"/>
    <property type="evidence" value="ECO:0007669"/>
    <property type="project" value="TreeGrafter"/>
</dbReference>
<dbReference type="GO" id="GO:0006412">
    <property type="term" value="P:translation"/>
    <property type="evidence" value="ECO:0007669"/>
    <property type="project" value="UniProtKB-KW"/>
</dbReference>
<dbReference type="FunFam" id="3.40.50.20:FF:000004">
    <property type="entry name" value="Probable alpha-L-glutamate ligase"/>
    <property type="match status" value="1"/>
</dbReference>
<dbReference type="FunFam" id="3.30.1490.20:FF:000005">
    <property type="entry name" value="Probable alpha-L-glutamate ligase 1"/>
    <property type="match status" value="1"/>
</dbReference>
<dbReference type="FunFam" id="3.30.470.20:FF:000016">
    <property type="entry name" value="Ribosomal protein S6--L-glutamate ligase"/>
    <property type="match status" value="1"/>
</dbReference>
<dbReference type="Gene3D" id="3.40.50.20">
    <property type="match status" value="1"/>
</dbReference>
<dbReference type="Gene3D" id="3.30.1490.20">
    <property type="entry name" value="ATP-grasp fold, A domain"/>
    <property type="match status" value="1"/>
</dbReference>
<dbReference type="Gene3D" id="3.30.470.20">
    <property type="entry name" value="ATP-grasp fold, B domain"/>
    <property type="match status" value="1"/>
</dbReference>
<dbReference type="HAMAP" id="MF_01552">
    <property type="entry name" value="RimK"/>
    <property type="match status" value="1"/>
</dbReference>
<dbReference type="InterPro" id="IPR011761">
    <property type="entry name" value="ATP-grasp"/>
</dbReference>
<dbReference type="InterPro" id="IPR013651">
    <property type="entry name" value="ATP-grasp_RimK-type"/>
</dbReference>
<dbReference type="InterPro" id="IPR013815">
    <property type="entry name" value="ATP_grasp_subdomain_1"/>
</dbReference>
<dbReference type="InterPro" id="IPR023533">
    <property type="entry name" value="RimK"/>
</dbReference>
<dbReference type="InterPro" id="IPR041107">
    <property type="entry name" value="Rimk_N"/>
</dbReference>
<dbReference type="InterPro" id="IPR004666">
    <property type="entry name" value="Rp_bS6_RimK/Lys_biosynth_LsyX"/>
</dbReference>
<dbReference type="NCBIfam" id="NF007764">
    <property type="entry name" value="PRK10446.1"/>
    <property type="match status" value="1"/>
</dbReference>
<dbReference type="NCBIfam" id="TIGR00768">
    <property type="entry name" value="rimK_fam"/>
    <property type="match status" value="1"/>
</dbReference>
<dbReference type="PANTHER" id="PTHR21621:SF7">
    <property type="entry name" value="RIBOSOMAL PROTEIN BS6--L-GLUTAMATE LIGASE"/>
    <property type="match status" value="1"/>
</dbReference>
<dbReference type="PANTHER" id="PTHR21621">
    <property type="entry name" value="RIBOSOMAL PROTEIN S6 MODIFICATION PROTEIN"/>
    <property type="match status" value="1"/>
</dbReference>
<dbReference type="Pfam" id="PF08443">
    <property type="entry name" value="RimK"/>
    <property type="match status" value="1"/>
</dbReference>
<dbReference type="Pfam" id="PF18030">
    <property type="entry name" value="Rimk_N"/>
    <property type="match status" value="1"/>
</dbReference>
<dbReference type="SUPFAM" id="SSF56059">
    <property type="entry name" value="Glutathione synthetase ATP-binding domain-like"/>
    <property type="match status" value="1"/>
</dbReference>
<dbReference type="PROSITE" id="PS50975">
    <property type="entry name" value="ATP_GRASP"/>
    <property type="match status" value="1"/>
</dbReference>
<evidence type="ECO:0000255" key="1">
    <source>
        <dbReference type="HAMAP-Rule" id="MF_01552"/>
    </source>
</evidence>
<keyword id="KW-0067">ATP-binding</keyword>
<keyword id="KW-0436">Ligase</keyword>
<keyword id="KW-0460">Magnesium</keyword>
<keyword id="KW-0464">Manganese</keyword>
<keyword id="KW-0479">Metal-binding</keyword>
<keyword id="KW-0547">Nucleotide-binding</keyword>
<keyword id="KW-0648">Protein biosynthesis</keyword>
<accession>Q12Y24</accession>